<gene>
    <name evidence="5" type="primary">hexA</name>
    <name type="ORF">AFUA_5G08830</name>
</gene>
<dbReference type="EMBL" id="AAHF01000003">
    <property type="protein sequence ID" value="EAL91716.2"/>
    <property type="molecule type" value="Genomic_DNA"/>
</dbReference>
<dbReference type="RefSeq" id="XP_753754.2">
    <property type="nucleotide sequence ID" value="XM_748661.2"/>
</dbReference>
<dbReference type="PDB" id="8QLU">
    <property type="method" value="X-ray"/>
    <property type="resolution" value="2.02 A"/>
    <property type="chains" value="A=320-537"/>
</dbReference>
<dbReference type="PDBsum" id="8QLU"/>
<dbReference type="SMR" id="Q4WUL0"/>
<dbReference type="STRING" id="330879.Q4WUL0"/>
<dbReference type="EnsemblFungi" id="EAL91716">
    <property type="protein sequence ID" value="EAL91716"/>
    <property type="gene ID" value="AFUA_5G08830"/>
</dbReference>
<dbReference type="GeneID" id="3510955"/>
<dbReference type="KEGG" id="afm:AFUA_5G08830"/>
<dbReference type="VEuPathDB" id="FungiDB:Afu5g08830"/>
<dbReference type="eggNOG" id="KOG3271">
    <property type="taxonomic scope" value="Eukaryota"/>
</dbReference>
<dbReference type="HOGENOM" id="CLU_021655_1_0_1"/>
<dbReference type="InParanoid" id="Q4WUL0"/>
<dbReference type="OMA" id="PARKMGY"/>
<dbReference type="OrthoDB" id="9975114at2759"/>
<dbReference type="Proteomes" id="UP000002530">
    <property type="component" value="Chromosome 5"/>
</dbReference>
<dbReference type="GO" id="GO:0000934">
    <property type="term" value="C:porous cell septum"/>
    <property type="evidence" value="ECO:0000314"/>
    <property type="project" value="AspGD"/>
</dbReference>
<dbReference type="GO" id="GO:0140266">
    <property type="term" value="C:Woronin body"/>
    <property type="evidence" value="ECO:0000314"/>
    <property type="project" value="GO_Central"/>
</dbReference>
<dbReference type="GO" id="GO:0043022">
    <property type="term" value="F:ribosome binding"/>
    <property type="evidence" value="ECO:0007669"/>
    <property type="project" value="InterPro"/>
</dbReference>
<dbReference type="GO" id="GO:0003723">
    <property type="term" value="F:RNA binding"/>
    <property type="evidence" value="ECO:0007669"/>
    <property type="project" value="InterPro"/>
</dbReference>
<dbReference type="GO" id="GO:0003746">
    <property type="term" value="F:translation elongation factor activity"/>
    <property type="evidence" value="ECO:0000318"/>
    <property type="project" value="GO_Central"/>
</dbReference>
<dbReference type="GO" id="GO:0045901">
    <property type="term" value="P:positive regulation of translational elongation"/>
    <property type="evidence" value="ECO:0007669"/>
    <property type="project" value="InterPro"/>
</dbReference>
<dbReference type="GO" id="GO:0009611">
    <property type="term" value="P:response to wounding"/>
    <property type="evidence" value="ECO:0000315"/>
    <property type="project" value="AspGD"/>
</dbReference>
<dbReference type="GO" id="GO:0006414">
    <property type="term" value="P:translational elongation"/>
    <property type="evidence" value="ECO:0000318"/>
    <property type="project" value="GO_Central"/>
</dbReference>
<dbReference type="CDD" id="cd04469">
    <property type="entry name" value="S1_Hex1"/>
    <property type="match status" value="1"/>
</dbReference>
<dbReference type="FunFam" id="2.30.30.30:FF:000033">
    <property type="entry name" value="Woronin body major protein HEX1"/>
    <property type="match status" value="1"/>
</dbReference>
<dbReference type="Gene3D" id="2.30.30.30">
    <property type="match status" value="1"/>
</dbReference>
<dbReference type="Gene3D" id="2.40.50.140">
    <property type="entry name" value="Nucleic acid-binding proteins"/>
    <property type="match status" value="1"/>
</dbReference>
<dbReference type="InterPro" id="IPR037318">
    <property type="entry name" value="Hex1_S1"/>
</dbReference>
<dbReference type="InterPro" id="IPR001884">
    <property type="entry name" value="IF5A-like"/>
</dbReference>
<dbReference type="InterPro" id="IPR012340">
    <property type="entry name" value="NA-bd_OB-fold"/>
</dbReference>
<dbReference type="InterPro" id="IPR014722">
    <property type="entry name" value="Rib_uL2_dom2"/>
</dbReference>
<dbReference type="InterPro" id="IPR008991">
    <property type="entry name" value="Translation_prot_SH3-like_sf"/>
</dbReference>
<dbReference type="PANTHER" id="PTHR11673">
    <property type="entry name" value="TRANSLATION INITIATION FACTOR 5A FAMILY MEMBER"/>
    <property type="match status" value="1"/>
</dbReference>
<dbReference type="SUPFAM" id="SSF50249">
    <property type="entry name" value="Nucleic acid-binding proteins"/>
    <property type="match status" value="1"/>
</dbReference>
<dbReference type="SUPFAM" id="SSF50104">
    <property type="entry name" value="Translation proteins SH3-like domain"/>
    <property type="match status" value="1"/>
</dbReference>
<evidence type="ECO:0000250" key="1">
    <source>
        <dbReference type="UniProtKB" id="P87252"/>
    </source>
</evidence>
<evidence type="ECO:0000256" key="2">
    <source>
        <dbReference type="SAM" id="MobiDB-lite"/>
    </source>
</evidence>
<evidence type="ECO:0000269" key="3">
    <source>
    </source>
</evidence>
<evidence type="ECO:0000269" key="4">
    <source>
    </source>
</evidence>
<evidence type="ECO:0000303" key="5">
    <source>
    </source>
</evidence>
<evidence type="ECO:0000305" key="6"/>
<evidence type="ECO:0000305" key="7">
    <source>
    </source>
</evidence>
<reference key="1">
    <citation type="journal article" date="2005" name="Nature">
        <title>Genomic sequence of the pathogenic and allergenic filamentous fungus Aspergillus fumigatus.</title>
        <authorList>
            <person name="Nierman W.C."/>
            <person name="Pain A."/>
            <person name="Anderson M.J."/>
            <person name="Wortman J.R."/>
            <person name="Kim H.S."/>
            <person name="Arroyo J."/>
            <person name="Berriman M."/>
            <person name="Abe K."/>
            <person name="Archer D.B."/>
            <person name="Bermejo C."/>
            <person name="Bennett J.W."/>
            <person name="Bowyer P."/>
            <person name="Chen D."/>
            <person name="Collins M."/>
            <person name="Coulsen R."/>
            <person name="Davies R."/>
            <person name="Dyer P.S."/>
            <person name="Farman M.L."/>
            <person name="Fedorova N."/>
            <person name="Fedorova N.D."/>
            <person name="Feldblyum T.V."/>
            <person name="Fischer R."/>
            <person name="Fosker N."/>
            <person name="Fraser A."/>
            <person name="Garcia J.L."/>
            <person name="Garcia M.J."/>
            <person name="Goble A."/>
            <person name="Goldman G.H."/>
            <person name="Gomi K."/>
            <person name="Griffith-Jones S."/>
            <person name="Gwilliam R."/>
            <person name="Haas B.J."/>
            <person name="Haas H."/>
            <person name="Harris D.E."/>
            <person name="Horiuchi H."/>
            <person name="Huang J."/>
            <person name="Humphray S."/>
            <person name="Jimenez J."/>
            <person name="Keller N."/>
            <person name="Khouri H."/>
            <person name="Kitamoto K."/>
            <person name="Kobayashi T."/>
            <person name="Konzack S."/>
            <person name="Kulkarni R."/>
            <person name="Kumagai T."/>
            <person name="Lafton A."/>
            <person name="Latge J.-P."/>
            <person name="Li W."/>
            <person name="Lord A."/>
            <person name="Lu C."/>
            <person name="Majoros W.H."/>
            <person name="May G.S."/>
            <person name="Miller B.L."/>
            <person name="Mohamoud Y."/>
            <person name="Molina M."/>
            <person name="Monod M."/>
            <person name="Mouyna I."/>
            <person name="Mulligan S."/>
            <person name="Murphy L.D."/>
            <person name="O'Neil S."/>
            <person name="Paulsen I."/>
            <person name="Penalva M.A."/>
            <person name="Pertea M."/>
            <person name="Price C."/>
            <person name="Pritchard B.L."/>
            <person name="Quail M.A."/>
            <person name="Rabbinowitsch E."/>
            <person name="Rawlins N."/>
            <person name="Rajandream M.A."/>
            <person name="Reichard U."/>
            <person name="Renauld H."/>
            <person name="Robson G.D."/>
            <person name="Rodriguez de Cordoba S."/>
            <person name="Rodriguez-Pena J.M."/>
            <person name="Ronning C.M."/>
            <person name="Rutter S."/>
            <person name="Salzberg S.L."/>
            <person name="Sanchez M."/>
            <person name="Sanchez-Ferrero J.C."/>
            <person name="Saunders D."/>
            <person name="Seeger K."/>
            <person name="Squares R."/>
            <person name="Squares S."/>
            <person name="Takeuchi M."/>
            <person name="Tekaia F."/>
            <person name="Turner G."/>
            <person name="Vazquez de Aldana C.R."/>
            <person name="Weidman J."/>
            <person name="White O."/>
            <person name="Woodward J.R."/>
            <person name="Yu J.-H."/>
            <person name="Fraser C.M."/>
            <person name="Galagan J.E."/>
            <person name="Asai K."/>
            <person name="Machida M."/>
            <person name="Hall N."/>
            <person name="Barrell B.G."/>
            <person name="Denning D.W."/>
        </authorList>
    </citation>
    <scope>NUCLEOTIDE SEQUENCE [LARGE SCALE GENOMIC DNA]</scope>
    <source>
        <strain>ATCC MYA-4609 / CBS 101355 / FGSC A1100 / Af293</strain>
    </source>
</reference>
<reference key="2">
    <citation type="journal article" date="2013" name="Int. J. Med. Microbiol.">
        <title>Characterization of the major Woronin body protein HexA of the human pathogenic mold Aspergillus fumigatus.</title>
        <authorList>
            <person name="Beck J."/>
            <person name="Ebel F."/>
        </authorList>
    </citation>
    <scope>FUNCTION</scope>
    <scope>SUBCELLULAR LOCATION</scope>
</reference>
<reference key="3">
    <citation type="journal article" date="2013" name="Mol. Microbiol.">
        <title>Woronin bodies, their impact on stress resistance and virulence of the pathogenic mould Aspergillus fumigatus and their anchoring at the septal pore of filamentous Ascomycota.</title>
        <authorList>
            <person name="Beck J."/>
            <person name="Echtenacher B."/>
            <person name="Ebel F."/>
        </authorList>
    </citation>
    <scope>FUNCTION</scope>
    <scope>DISRUPTION PHENOTYPE</scope>
</reference>
<sequence>MYSVESKFERDSRRDAQRTANLDFDARVPIPFSVFPSSYRSDAVPETTLTRVEGEVNLDRTSHVEREDTRTSAPLPDPRVYGREEVDIHISKDRLHAPSRKGDDFQVIYEDRAHKDSRVPEVELSRERWKRSENNAKQNKNKNNTSTRRSGDVLKAVSAKKVAPQAQTRADEKASYQLTQKARYRESTSRYEPLPPKPVYDQALESQLDITEREYRRRTDPTYDVNLSYGRHQAPVDSYQAYQPQQTSDVSLHRSKTEIDVSYDKAYTPKPLETRKGDSFSRSELTVESVPSRPSSASSISQVKVLKPYTAIDQPPARKMGYYDDDGNYHSFRRGVERAVDRITHPFHHHHHHHDREEVVIADERGPVRYRDGVREDVRIVEPRASKTTAESVPIPCHFIRIGDILILQGRPCQVIRISVSPQTGQHRYLGVDLFTRQLQEESSFVSNPSPSVVVQTMLGPVYKTYRILDLHEDGTITAMTETGDVKQALPVVTQGQLFRKIRDAFSEGRGSVRALVINDGGRELVVDYKVIHGSRL</sequence>
<keyword id="KW-0002">3D-structure</keyword>
<keyword id="KW-0963">Cytoplasm</keyword>
<keyword id="KW-1185">Reference proteome</keyword>
<name>HEXA_ASPFU</name>
<accession>Q4WUL0</accession>
<proteinExistence type="evidence at protein level"/>
<organism>
    <name type="scientific">Aspergillus fumigatus (strain ATCC MYA-4609 / CBS 101355 / FGSC A1100 / Af293)</name>
    <name type="common">Neosartorya fumigata</name>
    <dbReference type="NCBI Taxonomy" id="330879"/>
    <lineage>
        <taxon>Eukaryota</taxon>
        <taxon>Fungi</taxon>
        <taxon>Dikarya</taxon>
        <taxon>Ascomycota</taxon>
        <taxon>Pezizomycotina</taxon>
        <taxon>Eurotiomycetes</taxon>
        <taxon>Eurotiomycetidae</taxon>
        <taxon>Eurotiales</taxon>
        <taxon>Aspergillaceae</taxon>
        <taxon>Aspergillus</taxon>
        <taxon>Aspergillus subgen. Fumigati</taxon>
    </lineage>
</organism>
<protein>
    <recommendedName>
        <fullName evidence="5">Woronin body major protein hexA</fullName>
    </recommendedName>
</protein>
<comment type="function">
    <text evidence="3 4">Major component of Woronin bodies, fungal-specific organelles that occlude septal pores in order to separate intact from damaged compartments (PubMed:23332467, PubMed:23869404). HexA binds directly or indirectly to the Woronin body tether that in turn is anchored at the rim of the septal pore (PubMed:23869404). Woronin bodies are important for stress resistance and virulence (PubMed:23869404).</text>
</comment>
<comment type="subunit">
    <text evidence="1 7">Forms oligomers (By similarity). Self-assembles into hexagonal rods (By similarity). Binds directly or indirectly to the Woronin body tether lah (Probable).</text>
</comment>
<comment type="subcellular location">
    <subcellularLocation>
        <location evidence="3">Cell septum</location>
    </subcellularLocation>
    <subcellularLocation>
        <location evidence="3">Cytoplasm</location>
    </subcellularLocation>
    <text evidence="3 4">Localizes at Woronin bodies, fungal-specific organelles that plug the septal pore in case of physical damage (PubMed:23332467). Binds to the septal pore in a lah-dependent manner (PubMed:23869404).</text>
</comment>
<comment type="disruption phenotype">
    <text evidence="4">Leads to an increased sensitivity to stressors that affect the integrity of the cell wall and membrane, such as SDS, the antifungal agent fludioxonil, the acyclic sesquiterpene alcohol farnesol and the cell wall perturbing agents Calcofluor White and Congo Red (PubMed:23869404). Does not affect the resistance to hypo-osmotic stress but leads to a higher sensitivity to physical damage (PubMed:23869404). Results in the lack of Woronin bodies (PubMed:23869404). Attenuates virulence in a murine model of infection (PubMed:23869404).</text>
</comment>
<comment type="similarity">
    <text evidence="6">Belongs to the eIF-5A family. Hex1 subfamily.</text>
</comment>
<feature type="chain" id="PRO_0000455965" description="Woronin body major protein hexA">
    <location>
        <begin position="1"/>
        <end position="537"/>
    </location>
</feature>
<feature type="region of interest" description="Disordered" evidence="2">
    <location>
        <begin position="1"/>
        <end position="20"/>
    </location>
</feature>
<feature type="region of interest" description="Disordered" evidence="2">
    <location>
        <begin position="59"/>
        <end position="79"/>
    </location>
</feature>
<feature type="region of interest" description="Disordered" evidence="2">
    <location>
        <begin position="116"/>
        <end position="200"/>
    </location>
</feature>
<feature type="region of interest" description="Disordered" evidence="2">
    <location>
        <begin position="269"/>
        <end position="295"/>
    </location>
</feature>
<feature type="compositionally biased region" description="Basic and acidic residues" evidence="2">
    <location>
        <begin position="1"/>
        <end position="17"/>
    </location>
</feature>
<feature type="compositionally biased region" description="Basic and acidic residues" evidence="2">
    <location>
        <begin position="59"/>
        <end position="70"/>
    </location>
</feature>
<feature type="compositionally biased region" description="Basic and acidic residues" evidence="2">
    <location>
        <begin position="116"/>
        <end position="134"/>
    </location>
</feature>
<feature type="compositionally biased region" description="Low complexity" evidence="2">
    <location>
        <begin position="135"/>
        <end position="144"/>
    </location>
</feature>
<feature type="compositionally biased region" description="Basic and acidic residues" evidence="2">
    <location>
        <begin position="272"/>
        <end position="281"/>
    </location>
</feature>